<comment type="function">
    <text evidence="1">Binds directly to 16S ribosomal RNA.</text>
</comment>
<comment type="similarity">
    <text evidence="1">Belongs to the bacterial ribosomal protein bS20 family.</text>
</comment>
<reference key="1">
    <citation type="journal article" date="2010" name="PLoS ONE">
        <title>The complete multipartite genome sequence of Cupriavidus necator JMP134, a versatile pollutant degrader.</title>
        <authorList>
            <person name="Lykidis A."/>
            <person name="Perez-Pantoja D."/>
            <person name="Ledger T."/>
            <person name="Mavromatis K."/>
            <person name="Anderson I.J."/>
            <person name="Ivanova N.N."/>
            <person name="Hooper S.D."/>
            <person name="Lapidus A."/>
            <person name="Lucas S."/>
            <person name="Gonzalez B."/>
            <person name="Kyrpides N.C."/>
        </authorList>
    </citation>
    <scope>NUCLEOTIDE SEQUENCE [LARGE SCALE GENOMIC DNA]</scope>
    <source>
        <strain>JMP134 / LMG 1197</strain>
    </source>
</reference>
<name>RS20_CUPPJ</name>
<proteinExistence type="inferred from homology"/>
<accession>Q46XK7</accession>
<protein>
    <recommendedName>
        <fullName evidence="1">Small ribosomal subunit protein bS20</fullName>
    </recommendedName>
    <alternativeName>
        <fullName evidence="3">30S ribosomal protein S20</fullName>
    </alternativeName>
</protein>
<dbReference type="EMBL" id="CP000090">
    <property type="protein sequence ID" value="AAZ62126.1"/>
    <property type="molecule type" value="Genomic_DNA"/>
</dbReference>
<dbReference type="SMR" id="Q46XK7"/>
<dbReference type="STRING" id="264198.Reut_A2765"/>
<dbReference type="KEGG" id="reu:Reut_A2765"/>
<dbReference type="eggNOG" id="COG0268">
    <property type="taxonomic scope" value="Bacteria"/>
</dbReference>
<dbReference type="HOGENOM" id="CLU_160655_4_0_4"/>
<dbReference type="OrthoDB" id="9807974at2"/>
<dbReference type="GO" id="GO:0005829">
    <property type="term" value="C:cytosol"/>
    <property type="evidence" value="ECO:0007669"/>
    <property type="project" value="TreeGrafter"/>
</dbReference>
<dbReference type="GO" id="GO:0015935">
    <property type="term" value="C:small ribosomal subunit"/>
    <property type="evidence" value="ECO:0007669"/>
    <property type="project" value="TreeGrafter"/>
</dbReference>
<dbReference type="GO" id="GO:0070181">
    <property type="term" value="F:small ribosomal subunit rRNA binding"/>
    <property type="evidence" value="ECO:0007669"/>
    <property type="project" value="TreeGrafter"/>
</dbReference>
<dbReference type="GO" id="GO:0003735">
    <property type="term" value="F:structural constituent of ribosome"/>
    <property type="evidence" value="ECO:0007669"/>
    <property type="project" value="InterPro"/>
</dbReference>
<dbReference type="GO" id="GO:0006412">
    <property type="term" value="P:translation"/>
    <property type="evidence" value="ECO:0007669"/>
    <property type="project" value="UniProtKB-UniRule"/>
</dbReference>
<dbReference type="FunFam" id="1.20.58.110:FF:000001">
    <property type="entry name" value="30S ribosomal protein S20"/>
    <property type="match status" value="1"/>
</dbReference>
<dbReference type="Gene3D" id="1.20.58.110">
    <property type="entry name" value="Ribosomal protein S20"/>
    <property type="match status" value="1"/>
</dbReference>
<dbReference type="HAMAP" id="MF_00500">
    <property type="entry name" value="Ribosomal_bS20"/>
    <property type="match status" value="1"/>
</dbReference>
<dbReference type="InterPro" id="IPR002583">
    <property type="entry name" value="Ribosomal_bS20"/>
</dbReference>
<dbReference type="InterPro" id="IPR036510">
    <property type="entry name" value="Ribosomal_bS20_sf"/>
</dbReference>
<dbReference type="NCBIfam" id="TIGR00029">
    <property type="entry name" value="S20"/>
    <property type="match status" value="1"/>
</dbReference>
<dbReference type="PANTHER" id="PTHR33398">
    <property type="entry name" value="30S RIBOSOMAL PROTEIN S20"/>
    <property type="match status" value="1"/>
</dbReference>
<dbReference type="PANTHER" id="PTHR33398:SF1">
    <property type="entry name" value="SMALL RIBOSOMAL SUBUNIT PROTEIN BS20C"/>
    <property type="match status" value="1"/>
</dbReference>
<dbReference type="Pfam" id="PF01649">
    <property type="entry name" value="Ribosomal_S20p"/>
    <property type="match status" value="1"/>
</dbReference>
<dbReference type="SUPFAM" id="SSF46992">
    <property type="entry name" value="Ribosomal protein S20"/>
    <property type="match status" value="1"/>
</dbReference>
<gene>
    <name evidence="1" type="primary">rpsT</name>
    <name type="ordered locus">Reut_A2765</name>
</gene>
<organism>
    <name type="scientific">Cupriavidus pinatubonensis (strain JMP 134 / LMG 1197)</name>
    <name type="common">Cupriavidus necator (strain JMP 134)</name>
    <dbReference type="NCBI Taxonomy" id="264198"/>
    <lineage>
        <taxon>Bacteria</taxon>
        <taxon>Pseudomonadati</taxon>
        <taxon>Pseudomonadota</taxon>
        <taxon>Betaproteobacteria</taxon>
        <taxon>Burkholderiales</taxon>
        <taxon>Burkholderiaceae</taxon>
        <taxon>Cupriavidus</taxon>
    </lineage>
</organism>
<keyword id="KW-0687">Ribonucleoprotein</keyword>
<keyword id="KW-0689">Ribosomal protein</keyword>
<keyword id="KW-0694">RNA-binding</keyword>
<keyword id="KW-0699">rRNA-binding</keyword>
<evidence type="ECO:0000255" key="1">
    <source>
        <dbReference type="HAMAP-Rule" id="MF_00500"/>
    </source>
</evidence>
<evidence type="ECO:0000256" key="2">
    <source>
        <dbReference type="SAM" id="MobiDB-lite"/>
    </source>
</evidence>
<evidence type="ECO:0000305" key="3"/>
<sequence>MANSAQARKRARQAVAQNAHNSSLRSRLRTAVKAVRKAIDAGDKAAAAEIFKNSQATIDSIADKKIVHKNKAARHKSRLSAAIKAMAA</sequence>
<feature type="chain" id="PRO_0000224983" description="Small ribosomal subunit protein bS20">
    <location>
        <begin position="1"/>
        <end position="88"/>
    </location>
</feature>
<feature type="region of interest" description="Disordered" evidence="2">
    <location>
        <begin position="1"/>
        <end position="25"/>
    </location>
</feature>